<organism>
    <name type="scientific">Herminiimonas arsenicoxydans</name>
    <dbReference type="NCBI Taxonomy" id="204773"/>
    <lineage>
        <taxon>Bacteria</taxon>
        <taxon>Pseudomonadati</taxon>
        <taxon>Pseudomonadota</taxon>
        <taxon>Betaproteobacteria</taxon>
        <taxon>Burkholderiales</taxon>
        <taxon>Oxalobacteraceae</taxon>
        <taxon>Herminiimonas</taxon>
    </lineage>
</organism>
<protein>
    <recommendedName>
        <fullName evidence="1">Protein RecA</fullName>
    </recommendedName>
    <alternativeName>
        <fullName evidence="1">Recombinase A</fullName>
    </alternativeName>
</protein>
<name>RECA_HERAR</name>
<reference key="1">
    <citation type="journal article" date="2007" name="PLoS Genet.">
        <title>A tale of two oxidation states: bacterial colonization of arsenic-rich environments.</title>
        <authorList>
            <person name="Muller D."/>
            <person name="Medigue C."/>
            <person name="Koechler S."/>
            <person name="Barbe V."/>
            <person name="Barakat M."/>
            <person name="Talla E."/>
            <person name="Bonnefoy V."/>
            <person name="Krin E."/>
            <person name="Arsene-Ploetze F."/>
            <person name="Carapito C."/>
            <person name="Chandler M."/>
            <person name="Cournoyer B."/>
            <person name="Cruveiller S."/>
            <person name="Dossat C."/>
            <person name="Duval S."/>
            <person name="Heymann M."/>
            <person name="Leize E."/>
            <person name="Lieutaud A."/>
            <person name="Lievremont D."/>
            <person name="Makita Y."/>
            <person name="Mangenot S."/>
            <person name="Nitschke W."/>
            <person name="Ortet P."/>
            <person name="Perdrial N."/>
            <person name="Schoepp B."/>
            <person name="Siguier P."/>
            <person name="Simeonova D.D."/>
            <person name="Rouy Z."/>
            <person name="Segurens B."/>
            <person name="Turlin E."/>
            <person name="Vallenet D."/>
            <person name="van Dorsselaer A."/>
            <person name="Weiss S."/>
            <person name="Weissenbach J."/>
            <person name="Lett M.-C."/>
            <person name="Danchin A."/>
            <person name="Bertin P.N."/>
        </authorList>
    </citation>
    <scope>NUCLEOTIDE SEQUENCE [LARGE SCALE GENOMIC DNA]</scope>
    <source>
        <strain>ULPAs1</strain>
    </source>
</reference>
<sequence length="367" mass="39362">MDDKKNAPSSDKSKALAAALAQIEKQFGKGSVMRMEDGAVVEEVQVVSTGSLGLDLALGVGGLPRGRVVEIYGPESSGKTTLTLQTIAEMQKLGGTCAFIDAEHALDVTYAQKLGINLSELLISQPDTGEQALEICDALVRSGGVDLIVIDSVAALTPRAEIEGDMGDSLPGLQARLMSQALRKLTGSINRTNTLVIFINQIRMKIGVMFGNPETTTGGNALKFYASVRLDIRRTGSIKSGDEVIGNETKVKVVKNKIAPPFKEAHFEILYGEGTSREGEILDLGSDAKIVEKSGAWYSYNGERIGQGKDNARNYLKERPELAREIENKVRASLGVPELGAIKSDEPVAKKASAKESKEAKELKEVE</sequence>
<keyword id="KW-0067">ATP-binding</keyword>
<keyword id="KW-0963">Cytoplasm</keyword>
<keyword id="KW-0227">DNA damage</keyword>
<keyword id="KW-0233">DNA recombination</keyword>
<keyword id="KW-0234">DNA repair</keyword>
<keyword id="KW-0238">DNA-binding</keyword>
<keyword id="KW-0547">Nucleotide-binding</keyword>
<keyword id="KW-1185">Reference proteome</keyword>
<keyword id="KW-0742">SOS response</keyword>
<proteinExistence type="inferred from homology"/>
<gene>
    <name evidence="1" type="primary">recA</name>
    <name type="ordered locus">HEAR2628</name>
</gene>
<feature type="chain" id="PRO_1000047933" description="Protein RecA">
    <location>
        <begin position="1"/>
        <end position="367"/>
    </location>
</feature>
<feature type="region of interest" description="Disordered" evidence="2">
    <location>
        <begin position="345"/>
        <end position="367"/>
    </location>
</feature>
<feature type="binding site" evidence="1">
    <location>
        <begin position="73"/>
        <end position="80"/>
    </location>
    <ligand>
        <name>ATP</name>
        <dbReference type="ChEBI" id="CHEBI:30616"/>
    </ligand>
</feature>
<accession>A4G8B3</accession>
<dbReference type="EMBL" id="CU207211">
    <property type="protein sequence ID" value="CAL62750.1"/>
    <property type="molecule type" value="Genomic_DNA"/>
</dbReference>
<dbReference type="SMR" id="A4G8B3"/>
<dbReference type="STRING" id="204773.HEAR2628"/>
<dbReference type="KEGG" id="har:HEAR2628"/>
<dbReference type="eggNOG" id="COG0468">
    <property type="taxonomic scope" value="Bacteria"/>
</dbReference>
<dbReference type="HOGENOM" id="CLU_040469_3_2_4"/>
<dbReference type="OrthoDB" id="9776733at2"/>
<dbReference type="Proteomes" id="UP000006697">
    <property type="component" value="Chromosome"/>
</dbReference>
<dbReference type="GO" id="GO:0005829">
    <property type="term" value="C:cytosol"/>
    <property type="evidence" value="ECO:0007669"/>
    <property type="project" value="TreeGrafter"/>
</dbReference>
<dbReference type="GO" id="GO:0005524">
    <property type="term" value="F:ATP binding"/>
    <property type="evidence" value="ECO:0007669"/>
    <property type="project" value="UniProtKB-UniRule"/>
</dbReference>
<dbReference type="GO" id="GO:0016887">
    <property type="term" value="F:ATP hydrolysis activity"/>
    <property type="evidence" value="ECO:0007669"/>
    <property type="project" value="InterPro"/>
</dbReference>
<dbReference type="GO" id="GO:0140664">
    <property type="term" value="F:ATP-dependent DNA damage sensor activity"/>
    <property type="evidence" value="ECO:0007669"/>
    <property type="project" value="InterPro"/>
</dbReference>
<dbReference type="GO" id="GO:0003684">
    <property type="term" value="F:damaged DNA binding"/>
    <property type="evidence" value="ECO:0007669"/>
    <property type="project" value="UniProtKB-UniRule"/>
</dbReference>
<dbReference type="GO" id="GO:0003697">
    <property type="term" value="F:single-stranded DNA binding"/>
    <property type="evidence" value="ECO:0007669"/>
    <property type="project" value="UniProtKB-UniRule"/>
</dbReference>
<dbReference type="GO" id="GO:0006310">
    <property type="term" value="P:DNA recombination"/>
    <property type="evidence" value="ECO:0007669"/>
    <property type="project" value="UniProtKB-UniRule"/>
</dbReference>
<dbReference type="GO" id="GO:0006281">
    <property type="term" value="P:DNA repair"/>
    <property type="evidence" value="ECO:0007669"/>
    <property type="project" value="UniProtKB-UniRule"/>
</dbReference>
<dbReference type="GO" id="GO:0009432">
    <property type="term" value="P:SOS response"/>
    <property type="evidence" value="ECO:0007669"/>
    <property type="project" value="UniProtKB-UniRule"/>
</dbReference>
<dbReference type="CDD" id="cd00983">
    <property type="entry name" value="RecA"/>
    <property type="match status" value="1"/>
</dbReference>
<dbReference type="FunFam" id="3.40.50.300:FF:000087">
    <property type="entry name" value="Recombinase RecA"/>
    <property type="match status" value="1"/>
</dbReference>
<dbReference type="Gene3D" id="3.40.50.300">
    <property type="entry name" value="P-loop containing nucleotide triphosphate hydrolases"/>
    <property type="match status" value="1"/>
</dbReference>
<dbReference type="HAMAP" id="MF_00268">
    <property type="entry name" value="RecA"/>
    <property type="match status" value="1"/>
</dbReference>
<dbReference type="InterPro" id="IPR003593">
    <property type="entry name" value="AAA+_ATPase"/>
</dbReference>
<dbReference type="InterPro" id="IPR013765">
    <property type="entry name" value="DNA_recomb/repair_RecA"/>
</dbReference>
<dbReference type="InterPro" id="IPR020584">
    <property type="entry name" value="DNA_recomb/repair_RecA_CS"/>
</dbReference>
<dbReference type="InterPro" id="IPR027417">
    <property type="entry name" value="P-loop_NTPase"/>
</dbReference>
<dbReference type="InterPro" id="IPR049261">
    <property type="entry name" value="RecA-like_C"/>
</dbReference>
<dbReference type="InterPro" id="IPR049428">
    <property type="entry name" value="RecA-like_N"/>
</dbReference>
<dbReference type="InterPro" id="IPR020588">
    <property type="entry name" value="RecA_ATP-bd"/>
</dbReference>
<dbReference type="InterPro" id="IPR023400">
    <property type="entry name" value="RecA_C_sf"/>
</dbReference>
<dbReference type="InterPro" id="IPR020587">
    <property type="entry name" value="RecA_monomer-monomer_interface"/>
</dbReference>
<dbReference type="NCBIfam" id="TIGR02012">
    <property type="entry name" value="tigrfam_recA"/>
    <property type="match status" value="1"/>
</dbReference>
<dbReference type="PANTHER" id="PTHR45900:SF1">
    <property type="entry name" value="MITOCHONDRIAL DNA REPAIR PROTEIN RECA HOMOLOG-RELATED"/>
    <property type="match status" value="1"/>
</dbReference>
<dbReference type="PANTHER" id="PTHR45900">
    <property type="entry name" value="RECA"/>
    <property type="match status" value="1"/>
</dbReference>
<dbReference type="Pfam" id="PF00154">
    <property type="entry name" value="RecA"/>
    <property type="match status" value="1"/>
</dbReference>
<dbReference type="Pfam" id="PF21096">
    <property type="entry name" value="RecA_C"/>
    <property type="match status" value="1"/>
</dbReference>
<dbReference type="PRINTS" id="PR00142">
    <property type="entry name" value="RECA"/>
</dbReference>
<dbReference type="SMART" id="SM00382">
    <property type="entry name" value="AAA"/>
    <property type="match status" value="1"/>
</dbReference>
<dbReference type="SUPFAM" id="SSF52540">
    <property type="entry name" value="P-loop containing nucleoside triphosphate hydrolases"/>
    <property type="match status" value="1"/>
</dbReference>
<dbReference type="SUPFAM" id="SSF54752">
    <property type="entry name" value="RecA protein, C-terminal domain"/>
    <property type="match status" value="1"/>
</dbReference>
<dbReference type="PROSITE" id="PS00321">
    <property type="entry name" value="RECA_1"/>
    <property type="match status" value="1"/>
</dbReference>
<dbReference type="PROSITE" id="PS50162">
    <property type="entry name" value="RECA_2"/>
    <property type="match status" value="1"/>
</dbReference>
<dbReference type="PROSITE" id="PS50163">
    <property type="entry name" value="RECA_3"/>
    <property type="match status" value="1"/>
</dbReference>
<comment type="function">
    <text evidence="1">Can catalyze the hydrolysis of ATP in the presence of single-stranded DNA, the ATP-dependent uptake of single-stranded DNA by duplex DNA, and the ATP-dependent hybridization of homologous single-stranded DNAs. It interacts with LexA causing its activation and leading to its autocatalytic cleavage.</text>
</comment>
<comment type="subcellular location">
    <subcellularLocation>
        <location evidence="1">Cytoplasm</location>
    </subcellularLocation>
</comment>
<comment type="similarity">
    <text evidence="1">Belongs to the RecA family.</text>
</comment>
<evidence type="ECO:0000255" key="1">
    <source>
        <dbReference type="HAMAP-Rule" id="MF_00268"/>
    </source>
</evidence>
<evidence type="ECO:0000256" key="2">
    <source>
        <dbReference type="SAM" id="MobiDB-lite"/>
    </source>
</evidence>